<protein>
    <recommendedName>
        <fullName evidence="1">tRNA pseudouridine synthase B</fullName>
        <ecNumber evidence="1">5.4.99.25</ecNumber>
    </recommendedName>
    <alternativeName>
        <fullName evidence="1">tRNA pseudouridine(55) synthase</fullName>
        <shortName evidence="1">Psi55 synthase</shortName>
    </alternativeName>
    <alternativeName>
        <fullName evidence="1">tRNA pseudouridylate synthase</fullName>
    </alternativeName>
    <alternativeName>
        <fullName evidence="1">tRNA-uridine isomerase</fullName>
    </alternativeName>
</protein>
<gene>
    <name evidence="1" type="primary">truB</name>
    <name type="ordered locus">Cag_1460</name>
</gene>
<proteinExistence type="inferred from homology"/>
<keyword id="KW-0413">Isomerase</keyword>
<keyword id="KW-0819">tRNA processing</keyword>
<sequence length="255" mass="27784">MCNVHAQQGSAQEAPPPGELLLIDKPLDWTSFDVVAKVRNTYRKCGSKRKVGHCGTLDPKATGLLIVATGRKTKEISQLEQLDKVYDGVIKLGAITASHDTETPEEQLCDVAHLSEAELHAVAATFIGNRLQQPPMHSAAWHNGRRLYEHARKGEVIRERKAREIVVHRFTITNVALPFVSFELHVSKGAYIRVIADEFGAALGVGGYLAALRRTAIGEWQLTNALSVNDTIEQIHNNASKGALCGTASTIHPAT</sequence>
<evidence type="ECO:0000255" key="1">
    <source>
        <dbReference type="HAMAP-Rule" id="MF_01080"/>
    </source>
</evidence>
<feature type="chain" id="PRO_0000229349" description="tRNA pseudouridine synthase B">
    <location>
        <begin position="1"/>
        <end position="255"/>
    </location>
</feature>
<feature type="active site" description="Nucleophile" evidence="1">
    <location>
        <position position="58"/>
    </location>
</feature>
<comment type="function">
    <text evidence="1">Responsible for synthesis of pseudouridine from uracil-55 in the psi GC loop of transfer RNAs.</text>
</comment>
<comment type="catalytic activity">
    <reaction evidence="1">
        <text>uridine(55) in tRNA = pseudouridine(55) in tRNA</text>
        <dbReference type="Rhea" id="RHEA:42532"/>
        <dbReference type="Rhea" id="RHEA-COMP:10101"/>
        <dbReference type="Rhea" id="RHEA-COMP:10102"/>
        <dbReference type="ChEBI" id="CHEBI:65314"/>
        <dbReference type="ChEBI" id="CHEBI:65315"/>
        <dbReference type="EC" id="5.4.99.25"/>
    </reaction>
</comment>
<comment type="similarity">
    <text evidence="1">Belongs to the pseudouridine synthase TruB family. Type 1 subfamily.</text>
</comment>
<accession>Q3AQK9</accession>
<name>TRUB_CHLCH</name>
<reference key="1">
    <citation type="submission" date="2005-08" db="EMBL/GenBank/DDBJ databases">
        <title>Complete sequence of Chlorobium chlorochromatii CaD3.</title>
        <authorList>
            <consortium name="US DOE Joint Genome Institute"/>
            <person name="Copeland A."/>
            <person name="Lucas S."/>
            <person name="Lapidus A."/>
            <person name="Barry K."/>
            <person name="Detter J.C."/>
            <person name="Glavina T."/>
            <person name="Hammon N."/>
            <person name="Israni S."/>
            <person name="Pitluck S."/>
            <person name="Bryant D."/>
            <person name="Schmutz J."/>
            <person name="Larimer F."/>
            <person name="Land M."/>
            <person name="Kyrpides N."/>
            <person name="Ivanova N."/>
            <person name="Richardson P."/>
        </authorList>
    </citation>
    <scope>NUCLEOTIDE SEQUENCE [LARGE SCALE GENOMIC DNA]</scope>
    <source>
        <strain>CaD3</strain>
    </source>
</reference>
<organism>
    <name type="scientific">Chlorobium chlorochromatii (strain CaD3)</name>
    <dbReference type="NCBI Taxonomy" id="340177"/>
    <lineage>
        <taxon>Bacteria</taxon>
        <taxon>Pseudomonadati</taxon>
        <taxon>Chlorobiota</taxon>
        <taxon>Chlorobiia</taxon>
        <taxon>Chlorobiales</taxon>
        <taxon>Chlorobiaceae</taxon>
        <taxon>Chlorobium/Pelodictyon group</taxon>
        <taxon>Chlorobium</taxon>
    </lineage>
</organism>
<dbReference type="EC" id="5.4.99.25" evidence="1"/>
<dbReference type="EMBL" id="CP000108">
    <property type="protein sequence ID" value="ABB28716.1"/>
    <property type="molecule type" value="Genomic_DNA"/>
</dbReference>
<dbReference type="SMR" id="Q3AQK9"/>
<dbReference type="STRING" id="340177.Cag_1460"/>
<dbReference type="KEGG" id="cch:Cag_1460"/>
<dbReference type="eggNOG" id="COG0130">
    <property type="taxonomic scope" value="Bacteria"/>
</dbReference>
<dbReference type="HOGENOM" id="CLU_032087_2_0_10"/>
<dbReference type="OrthoDB" id="9802309at2"/>
<dbReference type="GO" id="GO:0003723">
    <property type="term" value="F:RNA binding"/>
    <property type="evidence" value="ECO:0007669"/>
    <property type="project" value="InterPro"/>
</dbReference>
<dbReference type="GO" id="GO:0160148">
    <property type="term" value="F:tRNA pseudouridine(55) synthase activity"/>
    <property type="evidence" value="ECO:0007669"/>
    <property type="project" value="UniProtKB-EC"/>
</dbReference>
<dbReference type="GO" id="GO:1990481">
    <property type="term" value="P:mRNA pseudouridine synthesis"/>
    <property type="evidence" value="ECO:0007669"/>
    <property type="project" value="TreeGrafter"/>
</dbReference>
<dbReference type="GO" id="GO:0031119">
    <property type="term" value="P:tRNA pseudouridine synthesis"/>
    <property type="evidence" value="ECO:0007669"/>
    <property type="project" value="UniProtKB-UniRule"/>
</dbReference>
<dbReference type="Gene3D" id="3.30.2350.10">
    <property type="entry name" value="Pseudouridine synthase"/>
    <property type="match status" value="1"/>
</dbReference>
<dbReference type="HAMAP" id="MF_01080">
    <property type="entry name" value="TruB_bact"/>
    <property type="match status" value="1"/>
</dbReference>
<dbReference type="InterPro" id="IPR020103">
    <property type="entry name" value="PsdUridine_synth_cat_dom_sf"/>
</dbReference>
<dbReference type="InterPro" id="IPR002501">
    <property type="entry name" value="PsdUridine_synth_N"/>
</dbReference>
<dbReference type="InterPro" id="IPR014780">
    <property type="entry name" value="tRNA_psdUridine_synth_TruB"/>
</dbReference>
<dbReference type="NCBIfam" id="TIGR00431">
    <property type="entry name" value="TruB"/>
    <property type="match status" value="1"/>
</dbReference>
<dbReference type="PANTHER" id="PTHR13767:SF2">
    <property type="entry name" value="PSEUDOURIDYLATE SYNTHASE TRUB1"/>
    <property type="match status" value="1"/>
</dbReference>
<dbReference type="PANTHER" id="PTHR13767">
    <property type="entry name" value="TRNA-PSEUDOURIDINE SYNTHASE"/>
    <property type="match status" value="1"/>
</dbReference>
<dbReference type="Pfam" id="PF01509">
    <property type="entry name" value="TruB_N"/>
    <property type="match status" value="1"/>
</dbReference>
<dbReference type="SUPFAM" id="SSF55120">
    <property type="entry name" value="Pseudouridine synthase"/>
    <property type="match status" value="1"/>
</dbReference>